<accession>Q0BJ27</accession>
<sequence length="144" mass="15066">MELNNLKPAAGAKHAKRRVGRGIGSGLGKTAGRGHKGQKSRSGGFHKVGFEGGQMPLQRRLPKRGFTSLTKEFVGEVRLGDLEKLPVDEIDLLALKQAGLVGELTKSAKIIATGELKRKIVVKGLGATKGARAAIEAAGGSFAE</sequence>
<keyword id="KW-0687">Ribonucleoprotein</keyword>
<keyword id="KW-0689">Ribosomal protein</keyword>
<keyword id="KW-0694">RNA-binding</keyword>
<keyword id="KW-0699">rRNA-binding</keyword>
<protein>
    <recommendedName>
        <fullName evidence="1">Large ribosomal subunit protein uL15</fullName>
    </recommendedName>
    <alternativeName>
        <fullName evidence="3">50S ribosomal protein L15</fullName>
    </alternativeName>
</protein>
<gene>
    <name evidence="1" type="primary">rplO</name>
    <name type="ordered locus">Bamb_0286</name>
</gene>
<dbReference type="EMBL" id="CP000440">
    <property type="protein sequence ID" value="ABI85846.1"/>
    <property type="molecule type" value="Genomic_DNA"/>
</dbReference>
<dbReference type="RefSeq" id="WP_006482880.1">
    <property type="nucleotide sequence ID" value="NZ_CP009798.1"/>
</dbReference>
<dbReference type="SMR" id="Q0BJ27"/>
<dbReference type="GeneID" id="98107141"/>
<dbReference type="KEGG" id="bam:Bamb_0286"/>
<dbReference type="PATRIC" id="fig|339670.21.peg.1334"/>
<dbReference type="eggNOG" id="COG0200">
    <property type="taxonomic scope" value="Bacteria"/>
</dbReference>
<dbReference type="Proteomes" id="UP000000662">
    <property type="component" value="Chromosome 1"/>
</dbReference>
<dbReference type="GO" id="GO:0022625">
    <property type="term" value="C:cytosolic large ribosomal subunit"/>
    <property type="evidence" value="ECO:0007669"/>
    <property type="project" value="TreeGrafter"/>
</dbReference>
<dbReference type="GO" id="GO:0019843">
    <property type="term" value="F:rRNA binding"/>
    <property type="evidence" value="ECO:0007669"/>
    <property type="project" value="UniProtKB-UniRule"/>
</dbReference>
<dbReference type="GO" id="GO:0003735">
    <property type="term" value="F:structural constituent of ribosome"/>
    <property type="evidence" value="ECO:0007669"/>
    <property type="project" value="InterPro"/>
</dbReference>
<dbReference type="GO" id="GO:0006412">
    <property type="term" value="P:translation"/>
    <property type="evidence" value="ECO:0007669"/>
    <property type="project" value="UniProtKB-UniRule"/>
</dbReference>
<dbReference type="Gene3D" id="3.100.10.10">
    <property type="match status" value="1"/>
</dbReference>
<dbReference type="HAMAP" id="MF_01341">
    <property type="entry name" value="Ribosomal_uL15"/>
    <property type="match status" value="1"/>
</dbReference>
<dbReference type="InterPro" id="IPR030878">
    <property type="entry name" value="Ribosomal_uL15"/>
</dbReference>
<dbReference type="InterPro" id="IPR021131">
    <property type="entry name" value="Ribosomal_uL15/eL18"/>
</dbReference>
<dbReference type="InterPro" id="IPR036227">
    <property type="entry name" value="Ribosomal_uL15/eL18_sf"/>
</dbReference>
<dbReference type="InterPro" id="IPR005749">
    <property type="entry name" value="Ribosomal_uL15_bac-type"/>
</dbReference>
<dbReference type="InterPro" id="IPR001196">
    <property type="entry name" value="Ribosomal_uL15_CS"/>
</dbReference>
<dbReference type="NCBIfam" id="TIGR01071">
    <property type="entry name" value="rplO_bact"/>
    <property type="match status" value="1"/>
</dbReference>
<dbReference type="PANTHER" id="PTHR12934">
    <property type="entry name" value="50S RIBOSOMAL PROTEIN L15"/>
    <property type="match status" value="1"/>
</dbReference>
<dbReference type="PANTHER" id="PTHR12934:SF11">
    <property type="entry name" value="LARGE RIBOSOMAL SUBUNIT PROTEIN UL15M"/>
    <property type="match status" value="1"/>
</dbReference>
<dbReference type="Pfam" id="PF00828">
    <property type="entry name" value="Ribosomal_L27A"/>
    <property type="match status" value="1"/>
</dbReference>
<dbReference type="SUPFAM" id="SSF52080">
    <property type="entry name" value="Ribosomal proteins L15p and L18e"/>
    <property type="match status" value="1"/>
</dbReference>
<dbReference type="PROSITE" id="PS00475">
    <property type="entry name" value="RIBOSOMAL_L15"/>
    <property type="match status" value="1"/>
</dbReference>
<name>RL15_BURCM</name>
<comment type="function">
    <text evidence="1">Binds to the 23S rRNA.</text>
</comment>
<comment type="subunit">
    <text evidence="1">Part of the 50S ribosomal subunit.</text>
</comment>
<comment type="similarity">
    <text evidence="1">Belongs to the universal ribosomal protein uL15 family.</text>
</comment>
<organism>
    <name type="scientific">Burkholderia ambifaria (strain ATCC BAA-244 / DSM 16087 / CCUG 44356 / LMG 19182 / AMMD)</name>
    <name type="common">Burkholderia cepacia (strain AMMD)</name>
    <dbReference type="NCBI Taxonomy" id="339670"/>
    <lineage>
        <taxon>Bacteria</taxon>
        <taxon>Pseudomonadati</taxon>
        <taxon>Pseudomonadota</taxon>
        <taxon>Betaproteobacteria</taxon>
        <taxon>Burkholderiales</taxon>
        <taxon>Burkholderiaceae</taxon>
        <taxon>Burkholderia</taxon>
        <taxon>Burkholderia cepacia complex</taxon>
    </lineage>
</organism>
<evidence type="ECO:0000255" key="1">
    <source>
        <dbReference type="HAMAP-Rule" id="MF_01341"/>
    </source>
</evidence>
<evidence type="ECO:0000256" key="2">
    <source>
        <dbReference type="SAM" id="MobiDB-lite"/>
    </source>
</evidence>
<evidence type="ECO:0000305" key="3"/>
<feature type="chain" id="PRO_1000054436" description="Large ribosomal subunit protein uL15">
    <location>
        <begin position="1"/>
        <end position="144"/>
    </location>
</feature>
<feature type="region of interest" description="Disordered" evidence="2">
    <location>
        <begin position="1"/>
        <end position="56"/>
    </location>
</feature>
<feature type="compositionally biased region" description="Gly residues" evidence="2">
    <location>
        <begin position="21"/>
        <end position="31"/>
    </location>
</feature>
<proteinExistence type="inferred from homology"/>
<reference key="1">
    <citation type="submission" date="2006-08" db="EMBL/GenBank/DDBJ databases">
        <title>Complete sequence of chromosome 1 of Burkholderia cepacia AMMD.</title>
        <authorList>
            <person name="Copeland A."/>
            <person name="Lucas S."/>
            <person name="Lapidus A."/>
            <person name="Barry K."/>
            <person name="Detter J.C."/>
            <person name="Glavina del Rio T."/>
            <person name="Hammon N."/>
            <person name="Israni S."/>
            <person name="Pitluck S."/>
            <person name="Bruce D."/>
            <person name="Chain P."/>
            <person name="Malfatti S."/>
            <person name="Shin M."/>
            <person name="Vergez L."/>
            <person name="Schmutz J."/>
            <person name="Larimer F."/>
            <person name="Land M."/>
            <person name="Hauser L."/>
            <person name="Kyrpides N."/>
            <person name="Kim E."/>
            <person name="Parke J."/>
            <person name="Coenye T."/>
            <person name="Konstantinidis K."/>
            <person name="Ramette A."/>
            <person name="Tiedje J."/>
            <person name="Richardson P."/>
        </authorList>
    </citation>
    <scope>NUCLEOTIDE SEQUENCE [LARGE SCALE GENOMIC DNA]</scope>
    <source>
        <strain>ATCC BAA-244 / DSM 16087 / CCUG 44356 / LMG 19182 / AMMD</strain>
    </source>
</reference>